<name>ACCD_CLOK5</name>
<evidence type="ECO:0000255" key="1">
    <source>
        <dbReference type="HAMAP-Rule" id="MF_01395"/>
    </source>
</evidence>
<evidence type="ECO:0000255" key="2">
    <source>
        <dbReference type="PROSITE-ProRule" id="PRU01136"/>
    </source>
</evidence>
<reference key="1">
    <citation type="journal article" date="2008" name="Proc. Natl. Acad. Sci. U.S.A.">
        <title>The genome of Clostridium kluyveri, a strict anaerobe with unique metabolic features.</title>
        <authorList>
            <person name="Seedorf H."/>
            <person name="Fricke W.F."/>
            <person name="Veith B."/>
            <person name="Brueggemann H."/>
            <person name="Liesegang H."/>
            <person name="Strittmatter A."/>
            <person name="Miethke M."/>
            <person name="Buckel W."/>
            <person name="Hinderberger J."/>
            <person name="Li F."/>
            <person name="Hagemeier C."/>
            <person name="Thauer R.K."/>
            <person name="Gottschalk G."/>
        </authorList>
    </citation>
    <scope>NUCLEOTIDE SEQUENCE [LARGE SCALE GENOMIC DNA]</scope>
    <source>
        <strain>ATCC 8527 / DSM 555 / NBRC 12016 / NCIMB 10680 / K1</strain>
    </source>
</reference>
<protein>
    <recommendedName>
        <fullName evidence="1">Acetyl-coenzyme A carboxylase carboxyl transferase subunit beta</fullName>
        <shortName evidence="1">ACCase subunit beta</shortName>
        <shortName evidence="1">Acetyl-CoA carboxylase carboxyltransferase subunit beta</shortName>
        <ecNumber evidence="1">2.1.3.15</ecNumber>
    </recommendedName>
</protein>
<gene>
    <name evidence="1" type="primary">accD</name>
    <name type="ordered locus">CKL_0111</name>
</gene>
<accession>A5N4F0</accession>
<dbReference type="EC" id="2.1.3.15" evidence="1"/>
<dbReference type="EMBL" id="CP000673">
    <property type="protein sequence ID" value="EDK32181.1"/>
    <property type="molecule type" value="Genomic_DNA"/>
</dbReference>
<dbReference type="RefSeq" id="WP_011988707.1">
    <property type="nucleotide sequence ID" value="NC_009706.1"/>
</dbReference>
<dbReference type="SMR" id="A5N4F0"/>
<dbReference type="STRING" id="431943.CKL_0111"/>
<dbReference type="KEGG" id="ckl:CKL_0111"/>
<dbReference type="eggNOG" id="COG0777">
    <property type="taxonomic scope" value="Bacteria"/>
</dbReference>
<dbReference type="HOGENOM" id="CLU_015486_1_1_9"/>
<dbReference type="UniPathway" id="UPA00655">
    <property type="reaction ID" value="UER00711"/>
</dbReference>
<dbReference type="Proteomes" id="UP000002411">
    <property type="component" value="Chromosome"/>
</dbReference>
<dbReference type="GO" id="GO:0009317">
    <property type="term" value="C:acetyl-CoA carboxylase complex"/>
    <property type="evidence" value="ECO:0007669"/>
    <property type="project" value="InterPro"/>
</dbReference>
<dbReference type="GO" id="GO:0003989">
    <property type="term" value="F:acetyl-CoA carboxylase activity"/>
    <property type="evidence" value="ECO:0007669"/>
    <property type="project" value="InterPro"/>
</dbReference>
<dbReference type="GO" id="GO:0005524">
    <property type="term" value="F:ATP binding"/>
    <property type="evidence" value="ECO:0007669"/>
    <property type="project" value="UniProtKB-KW"/>
</dbReference>
<dbReference type="GO" id="GO:0016743">
    <property type="term" value="F:carboxyl- or carbamoyltransferase activity"/>
    <property type="evidence" value="ECO:0007669"/>
    <property type="project" value="UniProtKB-UniRule"/>
</dbReference>
<dbReference type="GO" id="GO:0008270">
    <property type="term" value="F:zinc ion binding"/>
    <property type="evidence" value="ECO:0007669"/>
    <property type="project" value="UniProtKB-UniRule"/>
</dbReference>
<dbReference type="GO" id="GO:0006633">
    <property type="term" value="P:fatty acid biosynthetic process"/>
    <property type="evidence" value="ECO:0007669"/>
    <property type="project" value="UniProtKB-KW"/>
</dbReference>
<dbReference type="GO" id="GO:2001295">
    <property type="term" value="P:malonyl-CoA biosynthetic process"/>
    <property type="evidence" value="ECO:0007669"/>
    <property type="project" value="UniProtKB-UniRule"/>
</dbReference>
<dbReference type="Gene3D" id="3.90.226.10">
    <property type="entry name" value="2-enoyl-CoA Hydratase, Chain A, domain 1"/>
    <property type="match status" value="1"/>
</dbReference>
<dbReference type="HAMAP" id="MF_01395">
    <property type="entry name" value="AcetylCoA_CT_beta"/>
    <property type="match status" value="1"/>
</dbReference>
<dbReference type="InterPro" id="IPR034733">
    <property type="entry name" value="AcCoA_carboxyl_beta"/>
</dbReference>
<dbReference type="InterPro" id="IPR000438">
    <property type="entry name" value="Acetyl_CoA_COase_Trfase_b_su"/>
</dbReference>
<dbReference type="InterPro" id="IPR029045">
    <property type="entry name" value="ClpP/crotonase-like_dom_sf"/>
</dbReference>
<dbReference type="InterPro" id="IPR011762">
    <property type="entry name" value="COA_CT_N"/>
</dbReference>
<dbReference type="InterPro" id="IPR041010">
    <property type="entry name" value="Znf-ACC"/>
</dbReference>
<dbReference type="NCBIfam" id="TIGR00515">
    <property type="entry name" value="accD"/>
    <property type="match status" value="1"/>
</dbReference>
<dbReference type="PANTHER" id="PTHR42995">
    <property type="entry name" value="ACETYL-COENZYME A CARBOXYLASE CARBOXYL TRANSFERASE SUBUNIT BETA, CHLOROPLASTIC"/>
    <property type="match status" value="1"/>
</dbReference>
<dbReference type="PANTHER" id="PTHR42995:SF5">
    <property type="entry name" value="ACETYL-COENZYME A CARBOXYLASE CARBOXYL TRANSFERASE SUBUNIT BETA, CHLOROPLASTIC"/>
    <property type="match status" value="1"/>
</dbReference>
<dbReference type="Pfam" id="PF01039">
    <property type="entry name" value="Carboxyl_trans"/>
    <property type="match status" value="1"/>
</dbReference>
<dbReference type="Pfam" id="PF17848">
    <property type="entry name" value="Zn_ribbon_ACC"/>
    <property type="match status" value="1"/>
</dbReference>
<dbReference type="PRINTS" id="PR01070">
    <property type="entry name" value="ACCCTRFRASEB"/>
</dbReference>
<dbReference type="SUPFAM" id="SSF52096">
    <property type="entry name" value="ClpP/crotonase"/>
    <property type="match status" value="1"/>
</dbReference>
<dbReference type="PROSITE" id="PS50980">
    <property type="entry name" value="COA_CT_NTER"/>
    <property type="match status" value="1"/>
</dbReference>
<proteinExistence type="inferred from homology"/>
<comment type="function">
    <text evidence="1">Component of the acetyl coenzyme A carboxylase (ACC) complex. Biotin carboxylase (BC) catalyzes the carboxylation of biotin on its carrier protein (BCCP) and then the CO(2) group is transferred by the transcarboxylase to acetyl-CoA to form malonyl-CoA.</text>
</comment>
<comment type="catalytic activity">
    <reaction evidence="1">
        <text>N(6)-carboxybiotinyl-L-lysyl-[protein] + acetyl-CoA = N(6)-biotinyl-L-lysyl-[protein] + malonyl-CoA</text>
        <dbReference type="Rhea" id="RHEA:54728"/>
        <dbReference type="Rhea" id="RHEA-COMP:10505"/>
        <dbReference type="Rhea" id="RHEA-COMP:10506"/>
        <dbReference type="ChEBI" id="CHEBI:57288"/>
        <dbReference type="ChEBI" id="CHEBI:57384"/>
        <dbReference type="ChEBI" id="CHEBI:83144"/>
        <dbReference type="ChEBI" id="CHEBI:83145"/>
        <dbReference type="EC" id="2.1.3.15"/>
    </reaction>
</comment>
<comment type="cofactor">
    <cofactor evidence="1">
        <name>Zn(2+)</name>
        <dbReference type="ChEBI" id="CHEBI:29105"/>
    </cofactor>
    <text evidence="1">Binds 1 zinc ion per subunit.</text>
</comment>
<comment type="pathway">
    <text evidence="1">Lipid metabolism; malonyl-CoA biosynthesis; malonyl-CoA from acetyl-CoA: step 1/1.</text>
</comment>
<comment type="subunit">
    <text evidence="1">Acetyl-CoA carboxylase is a heterohexamer composed of biotin carboxyl carrier protein (AccB), biotin carboxylase (AccC) and two subunits each of ACCase subunit alpha (AccA) and ACCase subunit beta (AccD).</text>
</comment>
<comment type="subcellular location">
    <subcellularLocation>
        <location evidence="1">Cytoplasm</location>
    </subcellularLocation>
</comment>
<comment type="similarity">
    <text evidence="1">Belongs to the AccD/PCCB family.</text>
</comment>
<feature type="chain" id="PRO_0000389728" description="Acetyl-coenzyme A carboxylase carboxyl transferase subunit beta">
    <location>
        <begin position="1"/>
        <end position="291"/>
    </location>
</feature>
<feature type="domain" description="CoA carboxyltransferase N-terminal" evidence="2">
    <location>
        <begin position="36"/>
        <end position="291"/>
    </location>
</feature>
<feature type="zinc finger region" description="C4-type" evidence="1">
    <location>
        <begin position="40"/>
        <end position="62"/>
    </location>
</feature>
<feature type="binding site" evidence="1">
    <location>
        <position position="40"/>
    </location>
    <ligand>
        <name>Zn(2+)</name>
        <dbReference type="ChEBI" id="CHEBI:29105"/>
    </ligand>
</feature>
<feature type="binding site" evidence="1">
    <location>
        <position position="43"/>
    </location>
    <ligand>
        <name>Zn(2+)</name>
        <dbReference type="ChEBI" id="CHEBI:29105"/>
    </ligand>
</feature>
<feature type="binding site" evidence="1">
    <location>
        <position position="59"/>
    </location>
    <ligand>
        <name>Zn(2+)</name>
        <dbReference type="ChEBI" id="CHEBI:29105"/>
    </ligand>
</feature>
<feature type="binding site" evidence="1">
    <location>
        <position position="62"/>
    </location>
    <ligand>
        <name>Zn(2+)</name>
        <dbReference type="ChEBI" id="CHEBI:29105"/>
    </ligand>
</feature>
<keyword id="KW-0067">ATP-binding</keyword>
<keyword id="KW-0963">Cytoplasm</keyword>
<keyword id="KW-0275">Fatty acid biosynthesis</keyword>
<keyword id="KW-0276">Fatty acid metabolism</keyword>
<keyword id="KW-0444">Lipid biosynthesis</keyword>
<keyword id="KW-0443">Lipid metabolism</keyword>
<keyword id="KW-0479">Metal-binding</keyword>
<keyword id="KW-0547">Nucleotide-binding</keyword>
<keyword id="KW-1185">Reference proteome</keyword>
<keyword id="KW-0808">Transferase</keyword>
<keyword id="KW-0862">Zinc</keyword>
<keyword id="KW-0863">Zinc-finger</keyword>
<organism>
    <name type="scientific">Clostridium kluyveri (strain ATCC 8527 / DSM 555 / NBRC 12016 / NCIMB 10680 / K1)</name>
    <dbReference type="NCBI Taxonomy" id="431943"/>
    <lineage>
        <taxon>Bacteria</taxon>
        <taxon>Bacillati</taxon>
        <taxon>Bacillota</taxon>
        <taxon>Clostridia</taxon>
        <taxon>Eubacteriales</taxon>
        <taxon>Clostridiaceae</taxon>
        <taxon>Clostridium</taxon>
    </lineage>
</organism>
<sequence>MLNKFFKKTKYITVSQRALGDIHDDFTKKPSIPNGMWVKCDGCGKVLYKNDMEKNNKVCYHCGYHFRMNALERLELILDKESFYEFDKDITAANPIEFKGYEDKIKNMQNKTNIKEAVITGKGTIGREEAVVCIMDSNFMMGSMGSVVGEKITRAVEKSIELKLPLIIFTTSGGARMQEGIFSLMQMAKVSGAISRLNEEGLLYLSVLTDPTTGGVTASFAMIGDIILAEPGALIGFAGKRVIEQTIKQKLPEGFQKAEFLLQHGFIDNIVSRENLKETLRKILVIHGRGN</sequence>